<comment type="function">
    <text evidence="1 7 8">ATP-dependent transporter of the ATP-binding cassette (ABC) family that binds and hydrolyzes ATP to enable active transport of various substrates including many drugs, toxicants and endogenous compound across cell membranes. Transports glucuronide conjugates such as bilirubin diglucuronide, estradiol-17-beta-o-glucuronide and GSH conjugates such as leukotriene C4 (LTC4) (By similarity). Transports also various bile salts (taurocholate, glycocholate, taurochenodeoxycholate-3-sulfate, taurolithocholate- 3-sulfate) (By similarity). Does not contribute substantially to bile salt physiology but provides an alternative route for the export of bile acids and glucuronides from cholestatic hepatocytes (PubMed:15814571, PubMed:16225954). May contribute to regulate the transport of organic compounds in testes across the blood-testis-barrier (By similarity).</text>
</comment>
<comment type="catalytic activity">
    <reaction evidence="1">
        <text>an S-substituted glutathione(in) + ATP + H2O = an S-substituted glutathione(out) + ADP + phosphate + H(+)</text>
        <dbReference type="Rhea" id="RHEA:19121"/>
        <dbReference type="ChEBI" id="CHEBI:15377"/>
        <dbReference type="ChEBI" id="CHEBI:15378"/>
        <dbReference type="ChEBI" id="CHEBI:30616"/>
        <dbReference type="ChEBI" id="CHEBI:43474"/>
        <dbReference type="ChEBI" id="CHEBI:90779"/>
        <dbReference type="ChEBI" id="CHEBI:456216"/>
        <dbReference type="EC" id="7.6.2.3"/>
    </reaction>
    <physiologicalReaction direction="left-to-right" evidence="1">
        <dbReference type="Rhea" id="RHEA:19122"/>
    </physiologicalReaction>
</comment>
<comment type="catalytic activity">
    <reaction evidence="1">
        <text>ATP + H2O + xenobioticSide 1 = ADP + phosphate + xenobioticSide 2.</text>
        <dbReference type="EC" id="7.6.2.2"/>
    </reaction>
</comment>
<comment type="catalytic activity">
    <reaction evidence="1">
        <text>17beta-estradiol 17-O-(beta-D-glucuronate)(in) + ATP + H2O = 17beta-estradiol 17-O-(beta-D-glucuronate)(out) + ADP + phosphate + H(+)</text>
        <dbReference type="Rhea" id="RHEA:60128"/>
        <dbReference type="ChEBI" id="CHEBI:15377"/>
        <dbReference type="ChEBI" id="CHEBI:15378"/>
        <dbReference type="ChEBI" id="CHEBI:30616"/>
        <dbReference type="ChEBI" id="CHEBI:43474"/>
        <dbReference type="ChEBI" id="CHEBI:82961"/>
        <dbReference type="ChEBI" id="CHEBI:456216"/>
    </reaction>
    <physiologicalReaction direction="left-to-right" evidence="1">
        <dbReference type="Rhea" id="RHEA:60129"/>
    </physiologicalReaction>
</comment>
<comment type="catalytic activity">
    <reaction evidence="1">
        <text>dehydroepiandrosterone 3-sulfate(in) + ATP + H2O = dehydroepiandrosterone 3-sulfate(out) + ADP + phosphate + H(+)</text>
        <dbReference type="Rhea" id="RHEA:61364"/>
        <dbReference type="ChEBI" id="CHEBI:15377"/>
        <dbReference type="ChEBI" id="CHEBI:15378"/>
        <dbReference type="ChEBI" id="CHEBI:30616"/>
        <dbReference type="ChEBI" id="CHEBI:43474"/>
        <dbReference type="ChEBI" id="CHEBI:57905"/>
        <dbReference type="ChEBI" id="CHEBI:456216"/>
    </reaction>
    <physiologicalReaction direction="left-to-right" evidence="1">
        <dbReference type="Rhea" id="RHEA:61365"/>
    </physiologicalReaction>
</comment>
<comment type="catalytic activity">
    <reaction evidence="1">
        <text>leukotriene C4(in) + ATP + H2O = leukotriene C4(out) + ADP + phosphate + H(+)</text>
        <dbReference type="Rhea" id="RHEA:38963"/>
        <dbReference type="ChEBI" id="CHEBI:15377"/>
        <dbReference type="ChEBI" id="CHEBI:15378"/>
        <dbReference type="ChEBI" id="CHEBI:30616"/>
        <dbReference type="ChEBI" id="CHEBI:43474"/>
        <dbReference type="ChEBI" id="CHEBI:57973"/>
        <dbReference type="ChEBI" id="CHEBI:456216"/>
    </reaction>
    <physiologicalReaction direction="left-to-right" evidence="1">
        <dbReference type="Rhea" id="RHEA:38964"/>
    </physiologicalReaction>
</comment>
<comment type="catalytic activity">
    <reaction evidence="2">
        <text>taurocholate(in) + ATP + H2O = taurocholate(out) + ADP + phosphate + H(+)</text>
        <dbReference type="Rhea" id="RHEA:50052"/>
        <dbReference type="ChEBI" id="CHEBI:15377"/>
        <dbReference type="ChEBI" id="CHEBI:15378"/>
        <dbReference type="ChEBI" id="CHEBI:30616"/>
        <dbReference type="ChEBI" id="CHEBI:36257"/>
        <dbReference type="ChEBI" id="CHEBI:43474"/>
        <dbReference type="ChEBI" id="CHEBI:456216"/>
    </reaction>
    <physiologicalReaction direction="left-to-right" evidence="2">
        <dbReference type="Rhea" id="RHEA:50053"/>
    </physiologicalReaction>
</comment>
<comment type="catalytic activity">
    <reaction evidence="2">
        <text>glycocholate(in) + ATP + H2O = glycocholate(out) + ADP + phosphate + H(+)</text>
        <dbReference type="Rhea" id="RHEA:50056"/>
        <dbReference type="ChEBI" id="CHEBI:15377"/>
        <dbReference type="ChEBI" id="CHEBI:15378"/>
        <dbReference type="ChEBI" id="CHEBI:29746"/>
        <dbReference type="ChEBI" id="CHEBI:30616"/>
        <dbReference type="ChEBI" id="CHEBI:43474"/>
        <dbReference type="ChEBI" id="CHEBI:456216"/>
    </reaction>
    <physiologicalReaction direction="left-to-right" evidence="2">
        <dbReference type="Rhea" id="RHEA:50057"/>
    </physiologicalReaction>
</comment>
<comment type="catalytic activity">
    <reaction evidence="2">
        <text>taurolithocholate 3-sulfate(in) + ATP + H2O = taurolithocholate 3-sulfate(out) + ADP + phosphate + H(+)</text>
        <dbReference type="Rhea" id="RHEA:50084"/>
        <dbReference type="ChEBI" id="CHEBI:15377"/>
        <dbReference type="ChEBI" id="CHEBI:15378"/>
        <dbReference type="ChEBI" id="CHEBI:30616"/>
        <dbReference type="ChEBI" id="CHEBI:43474"/>
        <dbReference type="ChEBI" id="CHEBI:58301"/>
        <dbReference type="ChEBI" id="CHEBI:456216"/>
    </reaction>
</comment>
<comment type="catalytic activity">
    <reaction evidence="2">
        <text>taurochenodeoxycholate 3-sulfate(in) + ATP + H2O = taurochenodeoxycholate 3-sulfate(out) + ADP + phosphate + H(+)</text>
        <dbReference type="Rhea" id="RHEA:66176"/>
        <dbReference type="ChEBI" id="CHEBI:15377"/>
        <dbReference type="ChEBI" id="CHEBI:15378"/>
        <dbReference type="ChEBI" id="CHEBI:30616"/>
        <dbReference type="ChEBI" id="CHEBI:43474"/>
        <dbReference type="ChEBI" id="CHEBI:166912"/>
        <dbReference type="ChEBI" id="CHEBI:456216"/>
    </reaction>
    <physiologicalReaction direction="left-to-right" evidence="2">
        <dbReference type="Rhea" id="RHEA:66177"/>
    </physiologicalReaction>
</comment>
<comment type="catalytic activity">
    <reaction evidence="1">
        <text>(4Z,15Z)-bilirubin IXalpha C8-beta-D-glucuronoside(in) + ATP + H2O = (4Z,15Z)-bilirubin IXalpha C8-beta-D-glucuronoside(out) + ADP + phosphate + H(+)</text>
        <dbReference type="Rhea" id="RHEA:66180"/>
        <dbReference type="ChEBI" id="CHEBI:15377"/>
        <dbReference type="ChEBI" id="CHEBI:15378"/>
        <dbReference type="ChEBI" id="CHEBI:30616"/>
        <dbReference type="ChEBI" id="CHEBI:43474"/>
        <dbReference type="ChEBI" id="CHEBI:229704"/>
        <dbReference type="ChEBI" id="CHEBI:456216"/>
    </reaction>
    <physiologicalReaction direction="left-to-right" evidence="1">
        <dbReference type="Rhea" id="RHEA:66181"/>
    </physiologicalReaction>
</comment>
<comment type="catalytic activity">
    <reaction evidence="1">
        <text>(4Z,15Z)-bilirubin IXalpha C8,C12-beta-D-bisglucuronoside(in) + ATP + H2O = (4Z,15Z)-bilirubin IXalpha C8,C12-beta-D-bisglucuronoside(out) + ADP + phosphate + H(+)</text>
        <dbReference type="Rhea" id="RHEA:66192"/>
        <dbReference type="ChEBI" id="CHEBI:15377"/>
        <dbReference type="ChEBI" id="CHEBI:15378"/>
        <dbReference type="ChEBI" id="CHEBI:30616"/>
        <dbReference type="ChEBI" id="CHEBI:43474"/>
        <dbReference type="ChEBI" id="CHEBI:229706"/>
        <dbReference type="ChEBI" id="CHEBI:456216"/>
    </reaction>
    <physiologicalReaction direction="left-to-right" evidence="1">
        <dbReference type="Rhea" id="RHEA:66193"/>
    </physiologicalReaction>
</comment>
<comment type="subcellular location">
    <subcellularLocation>
        <location evidence="8">Basolateral cell membrane</location>
        <topology evidence="5">Multi-pass membrane protein</topology>
    </subcellularLocation>
    <subcellularLocation>
        <location evidence="1">Basal cell membrane</location>
        <topology evidence="5">Multi-pass membrane protein</topology>
    </subcellularLocation>
</comment>
<comment type="alternative products">
    <event type="alternative splicing"/>
    <isoform>
        <id>B2RX12-1</id>
        <name>1</name>
        <sequence type="displayed"/>
    </isoform>
    <isoform>
        <id>B2RX12-2</id>
        <name>2</name>
        <sequence type="described" ref="VSP_036012"/>
    </isoform>
    <isoform>
        <id>B2RX12-3</id>
        <name>3</name>
        <sequence type="described" ref="VSP_036011"/>
    </isoform>
</comment>
<comment type="tissue specificity">
    <text evidence="8">Detected throughout the gastrointestinal tract, liver, lung, pancreas, bladder, gall bladder and at low levels in the adrenal gland.</text>
</comment>
<comment type="disruption phenotype">
    <text evidence="7 8">Deficient mice do not exhibit any overt phenotype under normal conditions. However when challenged with cholestasis induced by bile duct ligation, increased levels of hepatic bile salts and lower serum levels of bilirubin glucuronide are observed, suggesting that Abcc3 provides an alternative route for removal from the liver of these substrates under cholestatic conditions.</text>
</comment>
<comment type="similarity">
    <text evidence="12">Belongs to the ABC transporter superfamily. ABCC family. Conjugate transporter (TC 3.A.1.208) subfamily.</text>
</comment>
<evidence type="ECO:0000250" key="1">
    <source>
        <dbReference type="UniProtKB" id="O15438"/>
    </source>
</evidence>
<evidence type="ECO:0000250" key="2">
    <source>
        <dbReference type="UniProtKB" id="O88563"/>
    </source>
</evidence>
<evidence type="ECO:0000255" key="3"/>
<evidence type="ECO:0000255" key="4">
    <source>
        <dbReference type="PROSITE-ProRule" id="PRU00434"/>
    </source>
</evidence>
<evidence type="ECO:0000255" key="5">
    <source>
        <dbReference type="PROSITE-ProRule" id="PRU00441"/>
    </source>
</evidence>
<evidence type="ECO:0000256" key="6">
    <source>
        <dbReference type="SAM" id="MobiDB-lite"/>
    </source>
</evidence>
<evidence type="ECO:0000269" key="7">
    <source>
    </source>
</evidence>
<evidence type="ECO:0000269" key="8">
    <source>
    </source>
</evidence>
<evidence type="ECO:0000303" key="9">
    <source>
    </source>
</evidence>
<evidence type="ECO:0000303" key="10">
    <source>
    </source>
</evidence>
<evidence type="ECO:0000303" key="11">
    <source ref="2"/>
</evidence>
<evidence type="ECO:0000305" key="12"/>
<dbReference type="EC" id="7.6.2.-" evidence="1"/>
<dbReference type="EC" id="7.6.2.2" evidence="1"/>
<dbReference type="EC" id="7.6.2.3" evidence="1"/>
<dbReference type="EMBL" id="AY841885">
    <property type="protein sequence ID" value="AAX39010.1"/>
    <property type="molecule type" value="mRNA"/>
</dbReference>
<dbReference type="EMBL" id="AY795569">
    <property type="protein sequence ID" value="AAX33774.1"/>
    <property type="molecule type" value="mRNA"/>
</dbReference>
<dbReference type="EMBL" id="AF534127">
    <property type="protein sequence ID" value="AAQ10530.1"/>
    <property type="molecule type" value="mRNA"/>
</dbReference>
<dbReference type="EMBL" id="AF534128">
    <property type="protein sequence ID" value="AAQ10531.1"/>
    <property type="molecule type" value="mRNA"/>
</dbReference>
<dbReference type="EMBL" id="AK149551">
    <property type="protein sequence ID" value="BAE28953.1"/>
    <property type="molecule type" value="mRNA"/>
</dbReference>
<dbReference type="EMBL" id="AK155664">
    <property type="protein sequence ID" value="BAE33375.1"/>
    <property type="molecule type" value="mRNA"/>
</dbReference>
<dbReference type="EMBL" id="AL645965">
    <property type="status" value="NOT_ANNOTATED_CDS"/>
    <property type="molecule type" value="Genomic_DNA"/>
</dbReference>
<dbReference type="EMBL" id="BC048825">
    <property type="protein sequence ID" value="AAH48825.1"/>
    <property type="molecule type" value="mRNA"/>
</dbReference>
<dbReference type="EMBL" id="BC150788">
    <property type="protein sequence ID" value="AAI50789.1"/>
    <property type="molecule type" value="mRNA"/>
</dbReference>
<dbReference type="CCDS" id="CCDS25254.1">
    <molecule id="B2RX12-2"/>
</dbReference>
<dbReference type="CCDS" id="CCDS88225.1">
    <molecule id="B2RX12-1"/>
</dbReference>
<dbReference type="RefSeq" id="NP_001350116.1">
    <molecule id="B2RX12-1"/>
    <property type="nucleotide sequence ID" value="NM_001363187.1"/>
</dbReference>
<dbReference type="RefSeq" id="NP_001350118.1">
    <molecule id="B2RX12-3"/>
    <property type="nucleotide sequence ID" value="NM_001363189.1"/>
</dbReference>
<dbReference type="RefSeq" id="NP_083876.3">
    <molecule id="B2RX12-2"/>
    <property type="nucleotide sequence ID" value="NM_029600.3"/>
</dbReference>
<dbReference type="RefSeq" id="XP_006534491.1">
    <property type="nucleotide sequence ID" value="XM_006534428.3"/>
</dbReference>
<dbReference type="SMR" id="B2RX12"/>
<dbReference type="FunCoup" id="B2RX12">
    <property type="interactions" value="399"/>
</dbReference>
<dbReference type="STRING" id="10090.ENSMUSP00000021231"/>
<dbReference type="ChEMBL" id="CHEMBL2073683"/>
<dbReference type="GlyCosmos" id="B2RX12">
    <property type="glycosylation" value="2 sites, No reported glycans"/>
</dbReference>
<dbReference type="GlyGen" id="B2RX12">
    <property type="glycosylation" value="2 sites"/>
</dbReference>
<dbReference type="iPTMnet" id="B2RX12"/>
<dbReference type="PhosphoSitePlus" id="B2RX12"/>
<dbReference type="SwissPalm" id="B2RX12"/>
<dbReference type="jPOST" id="B2RX12"/>
<dbReference type="PaxDb" id="10090-ENSMUSP00000021231"/>
<dbReference type="PeptideAtlas" id="B2RX12"/>
<dbReference type="ProteomicsDB" id="295655">
    <molecule id="B2RX12-1"/>
</dbReference>
<dbReference type="ProteomicsDB" id="295656">
    <molecule id="B2RX12-2"/>
</dbReference>
<dbReference type="ProteomicsDB" id="295657">
    <molecule id="B2RX12-3"/>
</dbReference>
<dbReference type="ProteomicsDB" id="373304"/>
<dbReference type="Antibodypedia" id="18128">
    <property type="antibodies" value="314 antibodies from 37 providers"/>
</dbReference>
<dbReference type="DNASU" id="76408"/>
<dbReference type="Ensembl" id="ENSMUST00000021231.8">
    <molecule id="B2RX12-2"/>
    <property type="protein sequence ID" value="ENSMUSP00000021231.8"/>
    <property type="gene ID" value="ENSMUSG00000020865.17"/>
</dbReference>
<dbReference type="Ensembl" id="ENSMUST00000178136.8">
    <molecule id="B2RX12-1"/>
    <property type="protein sequence ID" value="ENSMUSP00000136343.2"/>
    <property type="gene ID" value="ENSMUSG00000020865.17"/>
</dbReference>
<dbReference type="GeneID" id="76408"/>
<dbReference type="KEGG" id="mmu:76408"/>
<dbReference type="UCSC" id="uc007kym.1">
    <molecule id="B2RX12-2"/>
    <property type="organism name" value="mouse"/>
</dbReference>
<dbReference type="UCSC" id="uc011ycu.1">
    <molecule id="B2RX12-3"/>
    <property type="organism name" value="mouse"/>
</dbReference>
<dbReference type="AGR" id="MGI:1923658"/>
<dbReference type="CTD" id="8714"/>
<dbReference type="MGI" id="MGI:1923658">
    <property type="gene designation" value="Abcc3"/>
</dbReference>
<dbReference type="VEuPathDB" id="HostDB:ENSMUSG00000020865"/>
<dbReference type="eggNOG" id="KOG0054">
    <property type="taxonomic scope" value="Eukaryota"/>
</dbReference>
<dbReference type="GeneTree" id="ENSGT00940000161624"/>
<dbReference type="HOGENOM" id="CLU_000604_27_1_1"/>
<dbReference type="InParanoid" id="B2RX12"/>
<dbReference type="OMA" id="KTWIMAF"/>
<dbReference type="OrthoDB" id="6500128at2759"/>
<dbReference type="TreeFam" id="TF105199"/>
<dbReference type="Reactome" id="R-MMU-159418">
    <property type="pathway name" value="Recycling of bile acids and salts"/>
</dbReference>
<dbReference type="Reactome" id="R-MMU-382556">
    <property type="pathway name" value="ABC-family proteins mediated transport"/>
</dbReference>
<dbReference type="Reactome" id="R-MMU-9749641">
    <property type="pathway name" value="Aspirin ADME"/>
</dbReference>
<dbReference type="Reactome" id="R-MMU-9753281">
    <property type="pathway name" value="Paracetamol ADME"/>
</dbReference>
<dbReference type="BioGRID-ORCS" id="76408">
    <property type="hits" value="2 hits in 79 CRISPR screens"/>
</dbReference>
<dbReference type="ChiTaRS" id="Abcc3">
    <property type="organism name" value="mouse"/>
</dbReference>
<dbReference type="PRO" id="PR:B2RX12"/>
<dbReference type="Proteomes" id="UP000000589">
    <property type="component" value="Chromosome 11"/>
</dbReference>
<dbReference type="RNAct" id="B2RX12">
    <property type="molecule type" value="protein"/>
</dbReference>
<dbReference type="Bgee" id="ENSMUSG00000020865">
    <property type="expression patterns" value="Expressed in urinary bladder urothelium and 127 other cell types or tissues"/>
</dbReference>
<dbReference type="GO" id="GO:0016323">
    <property type="term" value="C:basolateral plasma membrane"/>
    <property type="evidence" value="ECO:0000314"/>
    <property type="project" value="UniProtKB"/>
</dbReference>
<dbReference type="GO" id="GO:0036064">
    <property type="term" value="C:ciliary basal body"/>
    <property type="evidence" value="ECO:0007669"/>
    <property type="project" value="Ensembl"/>
</dbReference>
<dbReference type="GO" id="GO:0005886">
    <property type="term" value="C:plasma membrane"/>
    <property type="evidence" value="ECO:0000314"/>
    <property type="project" value="MGI"/>
</dbReference>
<dbReference type="GO" id="GO:0015432">
    <property type="term" value="F:ABC-type bile acid transporter activity"/>
    <property type="evidence" value="ECO:0000250"/>
    <property type="project" value="UniProtKB"/>
</dbReference>
<dbReference type="GO" id="GO:0015431">
    <property type="term" value="F:ABC-type glutathione S-conjugate transporter activity"/>
    <property type="evidence" value="ECO:0000250"/>
    <property type="project" value="UniProtKB"/>
</dbReference>
<dbReference type="GO" id="GO:0008559">
    <property type="term" value="F:ABC-type xenobiotic transporter activity"/>
    <property type="evidence" value="ECO:0007669"/>
    <property type="project" value="UniProtKB-EC"/>
</dbReference>
<dbReference type="GO" id="GO:0005524">
    <property type="term" value="F:ATP binding"/>
    <property type="evidence" value="ECO:0007669"/>
    <property type="project" value="UniProtKB-KW"/>
</dbReference>
<dbReference type="GO" id="GO:0016887">
    <property type="term" value="F:ATP hydrolysis activity"/>
    <property type="evidence" value="ECO:0007669"/>
    <property type="project" value="InterPro"/>
</dbReference>
<dbReference type="GO" id="GO:0042626">
    <property type="term" value="F:ATPase-coupled transmembrane transporter activity"/>
    <property type="evidence" value="ECO:0000266"/>
    <property type="project" value="MGI"/>
</dbReference>
<dbReference type="GO" id="GO:0015164">
    <property type="term" value="F:glucuronoside transmembrane transporter activity"/>
    <property type="evidence" value="ECO:0007669"/>
    <property type="project" value="Ensembl"/>
</dbReference>
<dbReference type="GO" id="GO:0071714">
    <property type="term" value="F:icosanoid transmembrane transporter activity"/>
    <property type="evidence" value="ECO:0007669"/>
    <property type="project" value="Ensembl"/>
</dbReference>
<dbReference type="GO" id="GO:0015721">
    <property type="term" value="P:bile acid and bile salt transport"/>
    <property type="evidence" value="ECO:0000250"/>
    <property type="project" value="UniProtKB"/>
</dbReference>
<dbReference type="GO" id="GO:0015722">
    <property type="term" value="P:canalicular bile acid transport"/>
    <property type="evidence" value="ECO:0000266"/>
    <property type="project" value="MGI"/>
</dbReference>
<dbReference type="GO" id="GO:0071716">
    <property type="term" value="P:leukotriene transport"/>
    <property type="evidence" value="ECO:0000250"/>
    <property type="project" value="UniProtKB"/>
</dbReference>
<dbReference type="GO" id="GO:0006855">
    <property type="term" value="P:xenobiotic transmembrane transport"/>
    <property type="evidence" value="ECO:0007669"/>
    <property type="project" value="Ensembl"/>
</dbReference>
<dbReference type="CDD" id="cd18595">
    <property type="entry name" value="ABC_6TM_MRP1_2_3_6_D1_like"/>
    <property type="match status" value="1"/>
</dbReference>
<dbReference type="CDD" id="cd18603">
    <property type="entry name" value="ABC_6TM_MRP1_2_3_6_D2_like"/>
    <property type="match status" value="1"/>
</dbReference>
<dbReference type="CDD" id="cd03250">
    <property type="entry name" value="ABCC_MRP_domain1"/>
    <property type="match status" value="1"/>
</dbReference>
<dbReference type="CDD" id="cd03244">
    <property type="entry name" value="ABCC_MRP_domain2"/>
    <property type="match status" value="1"/>
</dbReference>
<dbReference type="FunFam" id="3.40.50.300:FF:000293">
    <property type="entry name" value="ATP binding cassette subfamily C member 1"/>
    <property type="match status" value="1"/>
</dbReference>
<dbReference type="FunFam" id="1.20.1560.10:FF:000001">
    <property type="entry name" value="ATP-binding cassette subfamily C member 1"/>
    <property type="match status" value="1"/>
</dbReference>
<dbReference type="FunFam" id="1.20.1560.10:FF:000007">
    <property type="entry name" value="ATP-binding cassette subfamily C member 1"/>
    <property type="match status" value="1"/>
</dbReference>
<dbReference type="FunFam" id="3.40.50.300:FF:000074">
    <property type="entry name" value="Multidrug resistance-associated protein 5 isoform 1"/>
    <property type="match status" value="1"/>
</dbReference>
<dbReference type="Gene3D" id="1.20.1560.10">
    <property type="entry name" value="ABC transporter type 1, transmembrane domain"/>
    <property type="match status" value="2"/>
</dbReference>
<dbReference type="Gene3D" id="3.40.50.300">
    <property type="entry name" value="P-loop containing nucleotide triphosphate hydrolases"/>
    <property type="match status" value="2"/>
</dbReference>
<dbReference type="InterPro" id="IPR003593">
    <property type="entry name" value="AAA+_ATPase"/>
</dbReference>
<dbReference type="InterPro" id="IPR011527">
    <property type="entry name" value="ABC1_TM_dom"/>
</dbReference>
<dbReference type="InterPro" id="IPR036640">
    <property type="entry name" value="ABC1_TM_sf"/>
</dbReference>
<dbReference type="InterPro" id="IPR003439">
    <property type="entry name" value="ABC_transporter-like_ATP-bd"/>
</dbReference>
<dbReference type="InterPro" id="IPR017871">
    <property type="entry name" value="ABC_transporter-like_CS"/>
</dbReference>
<dbReference type="InterPro" id="IPR050173">
    <property type="entry name" value="ABC_transporter_C-like"/>
</dbReference>
<dbReference type="InterPro" id="IPR005292">
    <property type="entry name" value="MRP"/>
</dbReference>
<dbReference type="InterPro" id="IPR027417">
    <property type="entry name" value="P-loop_NTPase"/>
</dbReference>
<dbReference type="InterPro" id="IPR056227">
    <property type="entry name" value="TMD0_ABC"/>
</dbReference>
<dbReference type="NCBIfam" id="TIGR00957">
    <property type="entry name" value="MRP_assoc_pro"/>
    <property type="match status" value="1"/>
</dbReference>
<dbReference type="PANTHER" id="PTHR24223">
    <property type="entry name" value="ATP-BINDING CASSETTE SUB-FAMILY C"/>
    <property type="match status" value="1"/>
</dbReference>
<dbReference type="PANTHER" id="PTHR24223:SF405">
    <property type="entry name" value="ATP-BINDING CASSETTE SUB-FAMILY C MEMBER 3"/>
    <property type="match status" value="1"/>
</dbReference>
<dbReference type="Pfam" id="PF00664">
    <property type="entry name" value="ABC_membrane"/>
    <property type="match status" value="2"/>
</dbReference>
<dbReference type="Pfam" id="PF00005">
    <property type="entry name" value="ABC_tran"/>
    <property type="match status" value="2"/>
</dbReference>
<dbReference type="Pfam" id="PF24357">
    <property type="entry name" value="TMD0_ABC"/>
    <property type="match status" value="1"/>
</dbReference>
<dbReference type="SMART" id="SM00382">
    <property type="entry name" value="AAA"/>
    <property type="match status" value="2"/>
</dbReference>
<dbReference type="SUPFAM" id="SSF90123">
    <property type="entry name" value="ABC transporter transmembrane region"/>
    <property type="match status" value="2"/>
</dbReference>
<dbReference type="SUPFAM" id="SSF52540">
    <property type="entry name" value="P-loop containing nucleoside triphosphate hydrolases"/>
    <property type="match status" value="2"/>
</dbReference>
<dbReference type="PROSITE" id="PS50929">
    <property type="entry name" value="ABC_TM1F"/>
    <property type="match status" value="2"/>
</dbReference>
<dbReference type="PROSITE" id="PS00211">
    <property type="entry name" value="ABC_TRANSPORTER_1"/>
    <property type="match status" value="2"/>
</dbReference>
<dbReference type="PROSITE" id="PS50893">
    <property type="entry name" value="ABC_TRANSPORTER_2"/>
    <property type="match status" value="2"/>
</dbReference>
<feature type="chain" id="PRO_0000356238" description="ATP-binding cassette sub-family C member 3">
    <location>
        <begin position="1"/>
        <end position="1523"/>
    </location>
</feature>
<feature type="topological domain" description="Extracellular" evidence="3">
    <location>
        <begin position="1"/>
        <end position="35"/>
    </location>
</feature>
<feature type="transmembrane region" description="Helical; Name=1" evidence="5">
    <location>
        <begin position="36"/>
        <end position="56"/>
    </location>
</feature>
<feature type="topological domain" description="Cytoplasmic" evidence="3">
    <location>
        <begin position="57"/>
        <end position="75"/>
    </location>
</feature>
<feature type="transmembrane region" description="Helical; Name=2" evidence="5">
    <location>
        <begin position="76"/>
        <end position="96"/>
    </location>
</feature>
<feature type="topological domain" description="Extracellular" evidence="3">
    <location>
        <begin position="97"/>
        <end position="102"/>
    </location>
</feature>
<feature type="transmembrane region" description="Helical; Name=3" evidence="5">
    <location>
        <begin position="103"/>
        <end position="123"/>
    </location>
</feature>
<feature type="topological domain" description="Cytoplasmic" evidence="3">
    <location>
        <begin position="124"/>
        <end position="129"/>
    </location>
</feature>
<feature type="transmembrane region" description="Helical; Name=4" evidence="5">
    <location>
        <begin position="130"/>
        <end position="150"/>
    </location>
</feature>
<feature type="topological domain" description="Extracellular" evidence="3">
    <location>
        <begin position="151"/>
        <end position="170"/>
    </location>
</feature>
<feature type="transmembrane region" description="Helical; Name=5" evidence="5">
    <location>
        <begin position="171"/>
        <end position="191"/>
    </location>
</feature>
<feature type="topological domain" description="Cytoplasmic" evidence="3">
    <location>
        <begin position="192"/>
        <end position="301"/>
    </location>
</feature>
<feature type="transmembrane region" description="Helical; Name=6" evidence="5">
    <location>
        <begin position="302"/>
        <end position="324"/>
    </location>
</feature>
<feature type="topological domain" description="Extracellular" evidence="3">
    <location>
        <begin position="325"/>
        <end position="345"/>
    </location>
</feature>
<feature type="transmembrane region" description="Helical; Name=7" evidence="5">
    <location>
        <begin position="346"/>
        <end position="366"/>
    </location>
</feature>
<feature type="topological domain" description="Cytoplasmic" evidence="3">
    <location>
        <begin position="367"/>
        <end position="419"/>
    </location>
</feature>
<feature type="transmembrane region" description="Helical; Name=8" evidence="5">
    <location>
        <begin position="420"/>
        <end position="440"/>
    </location>
</feature>
<feature type="topological domain" description="Extracellular" evidence="3">
    <location>
        <position position="441"/>
    </location>
</feature>
<feature type="transmembrane region" description="Helical; Name=9" evidence="5">
    <location>
        <begin position="442"/>
        <end position="462"/>
    </location>
</feature>
<feature type="topological domain" description="Cytoplasmic" evidence="3">
    <location>
        <begin position="463"/>
        <end position="535"/>
    </location>
</feature>
<feature type="transmembrane region" description="Helical; Name=10" evidence="5">
    <location>
        <begin position="536"/>
        <end position="556"/>
    </location>
</feature>
<feature type="topological domain" description="Extracellular" evidence="3">
    <location>
        <begin position="557"/>
        <end position="567"/>
    </location>
</feature>
<feature type="transmembrane region" description="Helical; Name=11" evidence="5">
    <location>
        <begin position="568"/>
        <end position="588"/>
    </location>
</feature>
<feature type="topological domain" description="Cytoplasmic" evidence="3">
    <location>
        <begin position="589"/>
        <end position="967"/>
    </location>
</feature>
<feature type="transmembrane region" description="Helical; Name=12" evidence="5">
    <location>
        <begin position="968"/>
        <end position="988"/>
    </location>
</feature>
<feature type="topological domain" description="Extracellular" evidence="3">
    <location>
        <begin position="989"/>
        <end position="1013"/>
    </location>
</feature>
<feature type="transmembrane region" description="Helical; Name=13" evidence="5">
    <location>
        <begin position="1014"/>
        <end position="1034"/>
    </location>
</feature>
<feature type="topological domain" description="Cytoplasmic" evidence="3">
    <location>
        <begin position="1035"/>
        <end position="1071"/>
    </location>
</feature>
<feature type="transmembrane region" description="Helical; Name=14" evidence="5">
    <location>
        <begin position="1072"/>
        <end position="1092"/>
    </location>
</feature>
<feature type="topological domain" description="Extracellular" evidence="3">
    <location>
        <begin position="1093"/>
        <end position="1096"/>
    </location>
</feature>
<feature type="transmembrane region" description="Helical; Name=15" evidence="5">
    <location>
        <begin position="1097"/>
        <end position="1117"/>
    </location>
</feature>
<feature type="topological domain" description="Cytoplasmic" evidence="3">
    <location>
        <begin position="1118"/>
        <end position="1191"/>
    </location>
</feature>
<feature type="transmembrane region" description="Helical; Name=16" evidence="5">
    <location>
        <begin position="1192"/>
        <end position="1212"/>
    </location>
</feature>
<feature type="topological domain" description="Extracellular" evidence="3">
    <location>
        <begin position="1213"/>
        <end position="1219"/>
    </location>
</feature>
<feature type="transmembrane region" description="Helical; Name=17" evidence="5">
    <location>
        <begin position="1220"/>
        <end position="1240"/>
    </location>
</feature>
<feature type="topological domain" description="Cytoplasmic" evidence="3">
    <location>
        <begin position="1241"/>
        <end position="1523"/>
    </location>
</feature>
<feature type="domain" description="ABC transmembrane type-1 1" evidence="5">
    <location>
        <begin position="310"/>
        <end position="593"/>
    </location>
</feature>
<feature type="domain" description="ABC transporter 1" evidence="4">
    <location>
        <begin position="626"/>
        <end position="850"/>
    </location>
</feature>
<feature type="domain" description="ABC transmembrane type-1 2" evidence="5">
    <location>
        <begin position="967"/>
        <end position="1248"/>
    </location>
</feature>
<feature type="domain" description="ABC transporter 2" evidence="4">
    <location>
        <begin position="1287"/>
        <end position="1519"/>
    </location>
</feature>
<feature type="region of interest" description="Disordered" evidence="6">
    <location>
        <begin position="903"/>
        <end position="923"/>
    </location>
</feature>
<feature type="compositionally biased region" description="Polar residues" evidence="6">
    <location>
        <begin position="903"/>
        <end position="915"/>
    </location>
</feature>
<feature type="binding site" evidence="4">
    <location>
        <begin position="660"/>
        <end position="667"/>
    </location>
    <ligand>
        <name>ATP</name>
        <dbReference type="ChEBI" id="CHEBI:30616"/>
        <label>1</label>
    </ligand>
</feature>
<feature type="binding site" evidence="4">
    <location>
        <begin position="1319"/>
        <end position="1326"/>
    </location>
    <ligand>
        <name>ATP</name>
        <dbReference type="ChEBI" id="CHEBI:30616"/>
        <label>2</label>
    </ligand>
</feature>
<feature type="modified residue" description="Phosphoserine" evidence="1">
    <location>
        <position position="903"/>
    </location>
</feature>
<feature type="modified residue" description="Phosphoserine" evidence="1">
    <location>
        <position position="906"/>
    </location>
</feature>
<feature type="glycosylation site" description="N-linked (GlcNAc...) asparagine" evidence="3">
    <location>
        <position position="18"/>
    </location>
</feature>
<feature type="glycosylation site" description="N-linked (GlcNAc...) asparagine" evidence="3">
    <location>
        <position position="1002"/>
    </location>
</feature>
<feature type="splice variant" id="VSP_036011" description="In isoform 3." evidence="11">
    <location>
        <begin position="803"/>
        <end position="827"/>
    </location>
</feature>
<feature type="splice variant" id="VSP_036012" description="In isoform 2." evidence="9 10">
    <location>
        <position position="862"/>
    </location>
</feature>
<feature type="sequence conflict" description="In Ref. 2; AAQ10530/AAQ10531." evidence="12" ref="2">
    <original>W</original>
    <variation>R</variation>
    <location>
        <position position="81"/>
    </location>
</feature>
<feature type="sequence conflict" description="In Ref. 3; BAE33375." evidence="12" ref="3">
    <original>D</original>
    <variation>N</variation>
    <location>
        <position position="247"/>
    </location>
</feature>
<feature type="sequence conflict" description="In Ref. 1; AAX39010/AAX33774, 2; AAQ10530/AAQ10531, 3; BAE33375 and 5; AAH48825/AAI50789." ref="1 2 3 5">
    <original>R</original>
    <variation>G</variation>
    <location>
        <position position="269"/>
    </location>
</feature>
<feature type="sequence conflict" description="In Ref. 3; BAE33375." evidence="12" ref="3">
    <original>E</original>
    <variation>G</variation>
    <location>
        <position position="742"/>
    </location>
</feature>
<organism>
    <name type="scientific">Mus musculus</name>
    <name type="common">Mouse</name>
    <dbReference type="NCBI Taxonomy" id="10090"/>
    <lineage>
        <taxon>Eukaryota</taxon>
        <taxon>Metazoa</taxon>
        <taxon>Chordata</taxon>
        <taxon>Craniata</taxon>
        <taxon>Vertebrata</taxon>
        <taxon>Euteleostomi</taxon>
        <taxon>Mammalia</taxon>
        <taxon>Eutheria</taxon>
        <taxon>Euarchontoglires</taxon>
        <taxon>Glires</taxon>
        <taxon>Rodentia</taxon>
        <taxon>Myomorpha</taxon>
        <taxon>Muroidea</taxon>
        <taxon>Muridae</taxon>
        <taxon>Murinae</taxon>
        <taxon>Mus</taxon>
        <taxon>Mus</taxon>
    </lineage>
</organism>
<proteinExistence type="evidence at protein level"/>
<sequence length="1523" mass="169223">MDRLCGSGELGSKFWDSNLSIYTNTPDLTPCFQNSLLAWVPCIYLWAALPCYLFYLRHHQLGYIVLSWLSRLKTALGVLLWCVSWVDLFYSFHGLIHGSSPAPVFFVTPLVVGITMLLATLLIQYERLRGVQSSGVLIIFWLLCVICAIIPFRSKILSALAEGKILDPFRFTTFYIYFALVFCALILSCFKEKPPLFSPENLDTNPCPEASAGFFSRLSFWWFTRLAILGYRRPLEDRDLWSLSEEDCSHKVVQRLLEAWQKQQNQASRSQTATAEPKIPGEDAVLLKPRPKSKQPSFLRALVRTFTSSLLMSACFNLIQNLLGFVNPQLLSILIRFISDPTAPTWWGFLLAGLMFLSSTMQTLILHQYYHCIFVMALRLRTAIIGVIYRKALVITNSVKRESTVGEMVNLMSVDAQRFMDVSPFINLLWSAPLQVILAIYFLWQILGPSALAGVAVIVLLIPLNGAVSMKMKTYQVKQMKFKDSRIKLMSEILNGIKVLKLYAWEPSFLEQVKGIRQSELQLLRKGAYLQAISTFIWICTPFLVTLITLGVYVYVDESNVLDAEKAFVSLSLFNILKIPLNMLPQLISGLTQASVSLKRIQDFLNQNELDPQCVERKTISPGYAITIHNGTFTWAQDLPPTLHSLNIQIPKGALVAVVGPVGCGKSSLVSALLGEMEKLEGVVSVKGSVAYVPQQAWIQNCTLQENVLFGQPMNPKRYQQALETCALLADLDVLPGGDQTEIGEKGINLSGGQRQRVSLARAVYSDANIFLLDDPLSAVDSHVAKHIFDQVIGPEGVLAGKTRVLVTHGISFLPQTDFIIVLAGGQVSEMGHYSALLQHDGSFANFLRNYAPDEDQEDHEAALQNANEEVLLLEDTLSTHTDLTDNEPAIYEVRKQFMREMSSLSSEGEVQNRTMPKKHTNSLEKEALVTKTKETGALIKEEIAETGNVKLSVYWDYAKSMGLCTTLSICLLYGGQSAAAIGANVWLSAWSNDAEEHGQQNKTSVRLGVYAALGILQGLLVMLSAFTMVVGAIQAARLLHEALLHNKIRSPQSFFDTTPSGRILNRFSKDIYVIDEVLAPTILMLLNSFFTSISTIMVIVASTPLFMVVVLPLAVLYGFVQRFYVATSRQLKRLESISRSPIFSHFSETVTGTSVIRAYGRIQDFKVLSDTKVDNNQKSSYPYIASNRWLGVHVEFVGNCVVLFAALFAVIGRNSLNPGLVGLSVSYALQVTMALNWMIRMISDLESNIIAVERVKEYSKTKTEAPWVVESNRAPEGWPTRGMVEFRNYSVRYRPGLELVLKNVTVHVQGGEKVGIVGRTGAGKSSMTLCLFRILEAAEGEIVIDGLNVAHIGLHDLRSQLTIIPQDPILFSGTLRMNLDPFGRYSEEDIWRALELSHLNTFVSSQPAGLDFQCAEGGDNLSVGQRQLVCLARALLRKSRVLVLDEATAAIDLETDDLIQGTIRTQFEDCTVLTIAHRLNTIMDYNRVLVLDKGVVAEFDSPVNLIAAGGIFYGMAKDAGLA</sequence>
<gene>
    <name type="primary">Abcc3</name>
    <name type="synonym">Cmoat2</name>
    <name type="synonym">Mrp3</name>
</gene>
<reference key="1">
    <citation type="journal article" date="2005" name="Mol. Pharmacol.">
        <title>Analysis of the in vivo functions of Mrp3.</title>
        <authorList>
            <person name="Belinsky M.G."/>
            <person name="Dawson P.A."/>
            <person name="Shchaveleva I."/>
            <person name="Bain L.J."/>
            <person name="Wang R."/>
            <person name="Ling V."/>
            <person name="Chen Z.-S."/>
            <person name="Grinberg A."/>
            <person name="Westphal H."/>
            <person name="Klein-Szanto A."/>
            <person name="Lerro A."/>
            <person name="Kruh G.D."/>
        </authorList>
    </citation>
    <scope>NUCLEOTIDE SEQUENCE [MRNA] (ISOFORM 1)</scope>
    <scope>FUNCTION</scope>
    <scope>DISRUPTION PHENOTYPE</scope>
</reference>
<reference key="2">
    <citation type="submission" date="2004-10" db="EMBL/GenBank/DDBJ databases">
        <authorList>
            <person name="Shimizu H."/>
            <person name="Ishikawa T."/>
            <person name="Yabuuchi H."/>
        </authorList>
    </citation>
    <scope>NUCLEOTIDE SEQUENCE [MRNA] (ISOFORMS 1 AND 3)</scope>
    <source>
        <strain>BALB/cJ</strain>
        <tissue>Liver</tissue>
    </source>
</reference>
<reference key="3">
    <citation type="journal article" date="2005" name="Science">
        <title>The transcriptional landscape of the mammalian genome.</title>
        <authorList>
            <person name="Carninci P."/>
            <person name="Kasukawa T."/>
            <person name="Katayama S."/>
            <person name="Gough J."/>
            <person name="Frith M.C."/>
            <person name="Maeda N."/>
            <person name="Oyama R."/>
            <person name="Ravasi T."/>
            <person name="Lenhard B."/>
            <person name="Wells C."/>
            <person name="Kodzius R."/>
            <person name="Shimokawa K."/>
            <person name="Bajic V.B."/>
            <person name="Brenner S.E."/>
            <person name="Batalov S."/>
            <person name="Forrest A.R."/>
            <person name="Zavolan M."/>
            <person name="Davis M.J."/>
            <person name="Wilming L.G."/>
            <person name="Aidinis V."/>
            <person name="Allen J.E."/>
            <person name="Ambesi-Impiombato A."/>
            <person name="Apweiler R."/>
            <person name="Aturaliya R.N."/>
            <person name="Bailey T.L."/>
            <person name="Bansal M."/>
            <person name="Baxter L."/>
            <person name="Beisel K.W."/>
            <person name="Bersano T."/>
            <person name="Bono H."/>
            <person name="Chalk A.M."/>
            <person name="Chiu K.P."/>
            <person name="Choudhary V."/>
            <person name="Christoffels A."/>
            <person name="Clutterbuck D.R."/>
            <person name="Crowe M.L."/>
            <person name="Dalla E."/>
            <person name="Dalrymple B.P."/>
            <person name="de Bono B."/>
            <person name="Della Gatta G."/>
            <person name="di Bernardo D."/>
            <person name="Down T."/>
            <person name="Engstrom P."/>
            <person name="Fagiolini M."/>
            <person name="Faulkner G."/>
            <person name="Fletcher C.F."/>
            <person name="Fukushima T."/>
            <person name="Furuno M."/>
            <person name="Futaki S."/>
            <person name="Gariboldi M."/>
            <person name="Georgii-Hemming P."/>
            <person name="Gingeras T.R."/>
            <person name="Gojobori T."/>
            <person name="Green R.E."/>
            <person name="Gustincich S."/>
            <person name="Harbers M."/>
            <person name="Hayashi Y."/>
            <person name="Hensch T.K."/>
            <person name="Hirokawa N."/>
            <person name="Hill D."/>
            <person name="Huminiecki L."/>
            <person name="Iacono M."/>
            <person name="Ikeo K."/>
            <person name="Iwama A."/>
            <person name="Ishikawa T."/>
            <person name="Jakt M."/>
            <person name="Kanapin A."/>
            <person name="Katoh M."/>
            <person name="Kawasawa Y."/>
            <person name="Kelso J."/>
            <person name="Kitamura H."/>
            <person name="Kitano H."/>
            <person name="Kollias G."/>
            <person name="Krishnan S.P."/>
            <person name="Kruger A."/>
            <person name="Kummerfeld S.K."/>
            <person name="Kurochkin I.V."/>
            <person name="Lareau L.F."/>
            <person name="Lazarevic D."/>
            <person name="Lipovich L."/>
            <person name="Liu J."/>
            <person name="Liuni S."/>
            <person name="McWilliam S."/>
            <person name="Madan Babu M."/>
            <person name="Madera M."/>
            <person name="Marchionni L."/>
            <person name="Matsuda H."/>
            <person name="Matsuzawa S."/>
            <person name="Miki H."/>
            <person name="Mignone F."/>
            <person name="Miyake S."/>
            <person name="Morris K."/>
            <person name="Mottagui-Tabar S."/>
            <person name="Mulder N."/>
            <person name="Nakano N."/>
            <person name="Nakauchi H."/>
            <person name="Ng P."/>
            <person name="Nilsson R."/>
            <person name="Nishiguchi S."/>
            <person name="Nishikawa S."/>
            <person name="Nori F."/>
            <person name="Ohara O."/>
            <person name="Okazaki Y."/>
            <person name="Orlando V."/>
            <person name="Pang K.C."/>
            <person name="Pavan W.J."/>
            <person name="Pavesi G."/>
            <person name="Pesole G."/>
            <person name="Petrovsky N."/>
            <person name="Piazza S."/>
            <person name="Reed J."/>
            <person name="Reid J.F."/>
            <person name="Ring B.Z."/>
            <person name="Ringwald M."/>
            <person name="Rost B."/>
            <person name="Ruan Y."/>
            <person name="Salzberg S.L."/>
            <person name="Sandelin A."/>
            <person name="Schneider C."/>
            <person name="Schoenbach C."/>
            <person name="Sekiguchi K."/>
            <person name="Semple C.A."/>
            <person name="Seno S."/>
            <person name="Sessa L."/>
            <person name="Sheng Y."/>
            <person name="Shibata Y."/>
            <person name="Shimada H."/>
            <person name="Shimada K."/>
            <person name="Silva D."/>
            <person name="Sinclair B."/>
            <person name="Sperling S."/>
            <person name="Stupka E."/>
            <person name="Sugiura K."/>
            <person name="Sultana R."/>
            <person name="Takenaka Y."/>
            <person name="Taki K."/>
            <person name="Tammoja K."/>
            <person name="Tan S.L."/>
            <person name="Tang S."/>
            <person name="Taylor M.S."/>
            <person name="Tegner J."/>
            <person name="Teichmann S.A."/>
            <person name="Ueda H.R."/>
            <person name="van Nimwegen E."/>
            <person name="Verardo R."/>
            <person name="Wei C.L."/>
            <person name="Yagi K."/>
            <person name="Yamanishi H."/>
            <person name="Zabarovsky E."/>
            <person name="Zhu S."/>
            <person name="Zimmer A."/>
            <person name="Hide W."/>
            <person name="Bult C."/>
            <person name="Grimmond S.M."/>
            <person name="Teasdale R.D."/>
            <person name="Liu E.T."/>
            <person name="Brusic V."/>
            <person name="Quackenbush J."/>
            <person name="Wahlestedt C."/>
            <person name="Mattick J.S."/>
            <person name="Hume D.A."/>
            <person name="Kai C."/>
            <person name="Sasaki D."/>
            <person name="Tomaru Y."/>
            <person name="Fukuda S."/>
            <person name="Kanamori-Katayama M."/>
            <person name="Suzuki M."/>
            <person name="Aoki J."/>
            <person name="Arakawa T."/>
            <person name="Iida J."/>
            <person name="Imamura K."/>
            <person name="Itoh M."/>
            <person name="Kato T."/>
            <person name="Kawaji H."/>
            <person name="Kawagashira N."/>
            <person name="Kawashima T."/>
            <person name="Kojima M."/>
            <person name="Kondo S."/>
            <person name="Konno H."/>
            <person name="Nakano K."/>
            <person name="Ninomiya N."/>
            <person name="Nishio T."/>
            <person name="Okada M."/>
            <person name="Plessy C."/>
            <person name="Shibata K."/>
            <person name="Shiraki T."/>
            <person name="Suzuki S."/>
            <person name="Tagami M."/>
            <person name="Waki K."/>
            <person name="Watahiki A."/>
            <person name="Okamura-Oho Y."/>
            <person name="Suzuki H."/>
            <person name="Kawai J."/>
            <person name="Hayashizaki Y."/>
        </authorList>
    </citation>
    <scope>NUCLEOTIDE SEQUENCE [LARGE SCALE MRNA] (ISOFORMS 1 AND 2)</scope>
    <source>
        <strain>C57BL/6J</strain>
        <tissue>Liver</tissue>
    </source>
</reference>
<reference key="4">
    <citation type="journal article" date="2009" name="PLoS Biol.">
        <title>Lineage-specific biology revealed by a finished genome assembly of the mouse.</title>
        <authorList>
            <person name="Church D.M."/>
            <person name="Goodstadt L."/>
            <person name="Hillier L.W."/>
            <person name="Zody M.C."/>
            <person name="Goldstein S."/>
            <person name="She X."/>
            <person name="Bult C.J."/>
            <person name="Agarwala R."/>
            <person name="Cherry J.L."/>
            <person name="DiCuccio M."/>
            <person name="Hlavina W."/>
            <person name="Kapustin Y."/>
            <person name="Meric P."/>
            <person name="Maglott D."/>
            <person name="Birtle Z."/>
            <person name="Marques A.C."/>
            <person name="Graves T."/>
            <person name="Zhou S."/>
            <person name="Teague B."/>
            <person name="Potamousis K."/>
            <person name="Churas C."/>
            <person name="Place M."/>
            <person name="Herschleb J."/>
            <person name="Runnheim R."/>
            <person name="Forrest D."/>
            <person name="Amos-Landgraf J."/>
            <person name="Schwartz D.C."/>
            <person name="Cheng Z."/>
            <person name="Lindblad-Toh K."/>
            <person name="Eichler E.E."/>
            <person name="Ponting C.P."/>
        </authorList>
    </citation>
    <scope>NUCLEOTIDE SEQUENCE [LARGE SCALE GENOMIC DNA]</scope>
    <source>
        <strain>C57BL/6J</strain>
    </source>
</reference>
<reference key="5">
    <citation type="journal article" date="2004" name="Genome Res.">
        <title>The status, quality, and expansion of the NIH full-length cDNA project: the Mammalian Gene Collection (MGC).</title>
        <authorList>
            <consortium name="The MGC Project Team"/>
        </authorList>
    </citation>
    <scope>NUCLEOTIDE SEQUENCE [LARGE SCALE MRNA] (ISOFORM 1)</scope>
    <scope>NUCLEOTIDE SEQUENCE [LARGE SCALE MRNA] OF 4-1523 (ISOFORM 2)</scope>
    <source>
        <strain>FVB/N</strain>
        <tissue>Brain</tissue>
        <tissue>Liver</tissue>
    </source>
</reference>
<reference key="6">
    <citation type="journal article" date="2007" name="Proc. Natl. Acad. Sci. U.S.A.">
        <title>Large-scale phosphorylation analysis of mouse liver.</title>
        <authorList>
            <person name="Villen J."/>
            <person name="Beausoleil S.A."/>
            <person name="Gerber S.A."/>
            <person name="Gygi S.P."/>
        </authorList>
    </citation>
    <scope>IDENTIFICATION BY MASS SPECTROMETRY [LARGE SCALE ANALYSIS]</scope>
    <source>
        <tissue>Liver</tissue>
    </source>
</reference>
<reference key="7">
    <citation type="journal article" date="2010" name="Cell">
        <title>A tissue-specific atlas of mouse protein phosphorylation and expression.</title>
        <authorList>
            <person name="Huttlin E.L."/>
            <person name="Jedrychowski M.P."/>
            <person name="Elias J.E."/>
            <person name="Goswami T."/>
            <person name="Rad R."/>
            <person name="Beausoleil S.A."/>
            <person name="Villen J."/>
            <person name="Haas W."/>
            <person name="Sowa M.E."/>
            <person name="Gygi S.P."/>
        </authorList>
    </citation>
    <scope>IDENTIFICATION BY MASS SPECTROMETRY [LARGE SCALE ANALYSIS]</scope>
    <source>
        <tissue>Kidney</tissue>
        <tissue>Liver</tissue>
        <tissue>Lung</tissue>
        <tissue>Spleen</tissue>
    </source>
</reference>
<reference key="8">
    <citation type="journal article" date="2006" name="J. Hepatol.">
        <title>Mice lacking Mrp3 (Abcc3) have normal bile salt transport, but altered hepatic transport of endogenous glucuronides.</title>
        <authorList>
            <person name="Zelcer N."/>
            <person name="van de Wetering K."/>
            <person name="de Waart R."/>
            <person name="Scheffer G.L."/>
            <person name="Marschall H.U."/>
            <person name="Wielinga P.R."/>
            <person name="Kuil A."/>
            <person name="Kunne C."/>
            <person name="Smith A."/>
            <person name="van der Valk M."/>
            <person name="Wijnholds J."/>
            <person name="Elferink R.O."/>
            <person name="Borst P."/>
        </authorList>
    </citation>
    <scope>DISRUPTION PHENOTYPE</scope>
    <scope>TISSUE SPECIFICITY</scope>
    <scope>SUBCELLULAR LOCATION</scope>
</reference>
<keyword id="KW-0025">Alternative splicing</keyword>
<keyword id="KW-0067">ATP-binding</keyword>
<keyword id="KW-1003">Cell membrane</keyword>
<keyword id="KW-0325">Glycoprotein</keyword>
<keyword id="KW-0445">Lipid transport</keyword>
<keyword id="KW-0472">Membrane</keyword>
<keyword id="KW-0547">Nucleotide-binding</keyword>
<keyword id="KW-0597">Phosphoprotein</keyword>
<keyword id="KW-1185">Reference proteome</keyword>
<keyword id="KW-0677">Repeat</keyword>
<keyword id="KW-1278">Translocase</keyword>
<keyword id="KW-0812">Transmembrane</keyword>
<keyword id="KW-1133">Transmembrane helix</keyword>
<keyword id="KW-0813">Transport</keyword>
<accession>B2RX12</accession>
<accession>J3QML2</accession>
<accession>Q3U1W8</accession>
<accession>Q56PH0</accession>
<accession>Q59DK9</accession>
<accession>Q59DL0</accession>
<accession>Q5SUF4</accession>
<accession>Q80ZK8</accession>
<protein>
    <recommendedName>
        <fullName>ATP-binding cassette sub-family C member 3</fullName>
        <ecNumber evidence="1">7.6.2.-</ecNumber>
        <ecNumber evidence="1">7.6.2.2</ecNumber>
        <ecNumber evidence="1">7.6.2.3</ecNumber>
    </recommendedName>
    <alternativeName>
        <fullName>Canalicular multispecific organic anion transporter 2</fullName>
    </alternativeName>
    <alternativeName>
        <fullName>Multidrug resistance-associated protein 3</fullName>
    </alternativeName>
</protein>
<name>MRP3_MOUSE</name>